<reference key="1">
    <citation type="journal article" date="2007" name="Archaea">
        <title>The genome of Hyperthermus butylicus: a sulfur-reducing, peptide fermenting, neutrophilic Crenarchaeote growing up to 108 degrees C.</title>
        <authorList>
            <person name="Bruegger K."/>
            <person name="Chen L."/>
            <person name="Stark M."/>
            <person name="Zibat A."/>
            <person name="Redder P."/>
            <person name="Ruepp A."/>
            <person name="Awayez M."/>
            <person name="She Q."/>
            <person name="Garrett R.A."/>
            <person name="Klenk H.-P."/>
        </authorList>
    </citation>
    <scope>NUCLEOTIDE SEQUENCE [LARGE SCALE GENOMIC DNA]</scope>
    <source>
        <strain>DSM 5456 / JCM 9403 / PLM1-5</strain>
    </source>
</reference>
<gene>
    <name evidence="1" type="primary">rpl22</name>
    <name type="ordered locus">Hbut_1305</name>
</gene>
<comment type="function">
    <text evidence="1">This protein binds specifically to 23S rRNA. It makes multiple contacts with different domains of the 23S rRNA in the assembled 50S subunit and ribosome.</text>
</comment>
<comment type="function">
    <text evidence="1">The globular domain of the protein is located near the polypeptide exit tunnel on the outside of the subunit, while an extended beta-hairpin is found that lines the wall of the exit tunnel in the center of the 70S ribosome.</text>
</comment>
<comment type="subunit">
    <text evidence="1">Part of the 50S ribosomal subunit.</text>
</comment>
<comment type="similarity">
    <text evidence="1">Belongs to the universal ribosomal protein uL22 family.</text>
</comment>
<proteinExistence type="inferred from homology"/>
<organism>
    <name type="scientific">Hyperthermus butylicus (strain DSM 5456 / JCM 9403 / PLM1-5)</name>
    <dbReference type="NCBI Taxonomy" id="415426"/>
    <lineage>
        <taxon>Archaea</taxon>
        <taxon>Thermoproteota</taxon>
        <taxon>Thermoprotei</taxon>
        <taxon>Desulfurococcales</taxon>
        <taxon>Pyrodictiaceae</taxon>
        <taxon>Hyperthermus</taxon>
    </lineage>
</organism>
<name>RL22_HYPBU</name>
<protein>
    <recommendedName>
        <fullName evidence="1">Large ribosomal subunit protein uL22</fullName>
    </recommendedName>
    <alternativeName>
        <fullName evidence="2">50S ribosomal protein L22</fullName>
    </alternativeName>
</protein>
<evidence type="ECO:0000255" key="1">
    <source>
        <dbReference type="HAMAP-Rule" id="MF_01331"/>
    </source>
</evidence>
<evidence type="ECO:0000305" key="2"/>
<keyword id="KW-1185">Reference proteome</keyword>
<keyword id="KW-0687">Ribonucleoprotein</keyword>
<keyword id="KW-0689">Ribosomal protein</keyword>
<keyword id="KW-0694">RNA-binding</keyword>
<keyword id="KW-0699">rRNA-binding</keyword>
<feature type="chain" id="PRO_1000052585" description="Large ribosomal subunit protein uL22">
    <location>
        <begin position="1"/>
        <end position="156"/>
    </location>
</feature>
<sequence>MPTWHYSVRVDEEKSAKAMVWDAPISYKKIVELARLLKGMKVDEARRFLERVARGEEPIPVRRYSGKQAHHRGLAAKYKWPIGRYPVKAAKILLRLLDNVTNNAEVKGLDTERLRIVHIAVHKGRVLKRWMPRAFGRATPKFKKYSHIEIVVAEEE</sequence>
<dbReference type="EMBL" id="CP000493">
    <property type="protein sequence ID" value="ABM81135.1"/>
    <property type="molecule type" value="Genomic_DNA"/>
</dbReference>
<dbReference type="RefSeq" id="WP_011822453.1">
    <property type="nucleotide sequence ID" value="NC_008818.1"/>
</dbReference>
<dbReference type="SMR" id="A2BMC4"/>
<dbReference type="STRING" id="415426.Hbut_1305"/>
<dbReference type="EnsemblBacteria" id="ABM81135">
    <property type="protein sequence ID" value="ABM81135"/>
    <property type="gene ID" value="Hbut_1305"/>
</dbReference>
<dbReference type="GeneID" id="4781934"/>
<dbReference type="KEGG" id="hbu:Hbut_1305"/>
<dbReference type="eggNOG" id="arCOG04098">
    <property type="taxonomic scope" value="Archaea"/>
</dbReference>
<dbReference type="HOGENOM" id="CLU_083987_0_2_2"/>
<dbReference type="OrthoDB" id="314984at2157"/>
<dbReference type="Proteomes" id="UP000002593">
    <property type="component" value="Chromosome"/>
</dbReference>
<dbReference type="GO" id="GO:0022625">
    <property type="term" value="C:cytosolic large ribosomal subunit"/>
    <property type="evidence" value="ECO:0007669"/>
    <property type="project" value="TreeGrafter"/>
</dbReference>
<dbReference type="GO" id="GO:0019843">
    <property type="term" value="F:rRNA binding"/>
    <property type="evidence" value="ECO:0007669"/>
    <property type="project" value="UniProtKB-UniRule"/>
</dbReference>
<dbReference type="GO" id="GO:0003735">
    <property type="term" value="F:structural constituent of ribosome"/>
    <property type="evidence" value="ECO:0007669"/>
    <property type="project" value="InterPro"/>
</dbReference>
<dbReference type="GO" id="GO:0002181">
    <property type="term" value="P:cytoplasmic translation"/>
    <property type="evidence" value="ECO:0007669"/>
    <property type="project" value="TreeGrafter"/>
</dbReference>
<dbReference type="CDD" id="cd00336">
    <property type="entry name" value="Ribosomal_L22"/>
    <property type="match status" value="1"/>
</dbReference>
<dbReference type="Gene3D" id="3.90.470.10">
    <property type="entry name" value="Ribosomal protein L22/L17"/>
    <property type="match status" value="1"/>
</dbReference>
<dbReference type="HAMAP" id="MF_01331_A">
    <property type="entry name" value="Ribosomal_uL22_A"/>
    <property type="match status" value="1"/>
</dbReference>
<dbReference type="InterPro" id="IPR001063">
    <property type="entry name" value="Ribosomal_uL22"/>
</dbReference>
<dbReference type="InterPro" id="IPR018260">
    <property type="entry name" value="Ribosomal_uL22_CS"/>
</dbReference>
<dbReference type="InterPro" id="IPR005721">
    <property type="entry name" value="Ribosomal_uL22_euk/arc"/>
</dbReference>
<dbReference type="InterPro" id="IPR036394">
    <property type="entry name" value="Ribosomal_uL22_sf"/>
</dbReference>
<dbReference type="NCBIfam" id="NF003260">
    <property type="entry name" value="PRK04223.1"/>
    <property type="match status" value="1"/>
</dbReference>
<dbReference type="NCBIfam" id="TIGR01038">
    <property type="entry name" value="uL22_arch_euk"/>
    <property type="match status" value="1"/>
</dbReference>
<dbReference type="PANTHER" id="PTHR11593">
    <property type="entry name" value="60S RIBOSOMAL PROTEIN L17"/>
    <property type="match status" value="1"/>
</dbReference>
<dbReference type="PANTHER" id="PTHR11593:SF10">
    <property type="entry name" value="60S RIBOSOMAL PROTEIN L17"/>
    <property type="match status" value="1"/>
</dbReference>
<dbReference type="Pfam" id="PF00237">
    <property type="entry name" value="Ribosomal_L22"/>
    <property type="match status" value="1"/>
</dbReference>
<dbReference type="SUPFAM" id="SSF54843">
    <property type="entry name" value="Ribosomal protein L22"/>
    <property type="match status" value="1"/>
</dbReference>
<dbReference type="PROSITE" id="PS00464">
    <property type="entry name" value="RIBOSOMAL_L22"/>
    <property type="match status" value="1"/>
</dbReference>
<accession>A2BMC4</accession>